<reference key="1">
    <citation type="journal article" date="2013" name="Nature">
        <title>The zebrafish reference genome sequence and its relationship to the human genome.</title>
        <authorList>
            <person name="Howe K."/>
            <person name="Clark M.D."/>
            <person name="Torroja C.F."/>
            <person name="Torrance J."/>
            <person name="Berthelot C."/>
            <person name="Muffato M."/>
            <person name="Collins J.E."/>
            <person name="Humphray S."/>
            <person name="McLaren K."/>
            <person name="Matthews L."/>
            <person name="McLaren S."/>
            <person name="Sealy I."/>
            <person name="Caccamo M."/>
            <person name="Churcher C."/>
            <person name="Scott C."/>
            <person name="Barrett J.C."/>
            <person name="Koch R."/>
            <person name="Rauch G.J."/>
            <person name="White S."/>
            <person name="Chow W."/>
            <person name="Kilian B."/>
            <person name="Quintais L.T."/>
            <person name="Guerra-Assuncao J.A."/>
            <person name="Zhou Y."/>
            <person name="Gu Y."/>
            <person name="Yen J."/>
            <person name="Vogel J.H."/>
            <person name="Eyre T."/>
            <person name="Redmond S."/>
            <person name="Banerjee R."/>
            <person name="Chi J."/>
            <person name="Fu B."/>
            <person name="Langley E."/>
            <person name="Maguire S.F."/>
            <person name="Laird G.K."/>
            <person name="Lloyd D."/>
            <person name="Kenyon E."/>
            <person name="Donaldson S."/>
            <person name="Sehra H."/>
            <person name="Almeida-King J."/>
            <person name="Loveland J."/>
            <person name="Trevanion S."/>
            <person name="Jones M."/>
            <person name="Quail M."/>
            <person name="Willey D."/>
            <person name="Hunt A."/>
            <person name="Burton J."/>
            <person name="Sims S."/>
            <person name="McLay K."/>
            <person name="Plumb B."/>
            <person name="Davis J."/>
            <person name="Clee C."/>
            <person name="Oliver K."/>
            <person name="Clark R."/>
            <person name="Riddle C."/>
            <person name="Elliot D."/>
            <person name="Threadgold G."/>
            <person name="Harden G."/>
            <person name="Ware D."/>
            <person name="Begum S."/>
            <person name="Mortimore B."/>
            <person name="Kerry G."/>
            <person name="Heath P."/>
            <person name="Phillimore B."/>
            <person name="Tracey A."/>
            <person name="Corby N."/>
            <person name="Dunn M."/>
            <person name="Johnson C."/>
            <person name="Wood J."/>
            <person name="Clark S."/>
            <person name="Pelan S."/>
            <person name="Griffiths G."/>
            <person name="Smith M."/>
            <person name="Glithero R."/>
            <person name="Howden P."/>
            <person name="Barker N."/>
            <person name="Lloyd C."/>
            <person name="Stevens C."/>
            <person name="Harley J."/>
            <person name="Holt K."/>
            <person name="Panagiotidis G."/>
            <person name="Lovell J."/>
            <person name="Beasley H."/>
            <person name="Henderson C."/>
            <person name="Gordon D."/>
            <person name="Auger K."/>
            <person name="Wright D."/>
            <person name="Collins J."/>
            <person name="Raisen C."/>
            <person name="Dyer L."/>
            <person name="Leung K."/>
            <person name="Robertson L."/>
            <person name="Ambridge K."/>
            <person name="Leongamornlert D."/>
            <person name="McGuire S."/>
            <person name="Gilderthorp R."/>
            <person name="Griffiths C."/>
            <person name="Manthravadi D."/>
            <person name="Nichol S."/>
            <person name="Barker G."/>
            <person name="Whitehead S."/>
            <person name="Kay M."/>
            <person name="Brown J."/>
            <person name="Murnane C."/>
            <person name="Gray E."/>
            <person name="Humphries M."/>
            <person name="Sycamore N."/>
            <person name="Barker D."/>
            <person name="Saunders D."/>
            <person name="Wallis J."/>
            <person name="Babbage A."/>
            <person name="Hammond S."/>
            <person name="Mashreghi-Mohammadi M."/>
            <person name="Barr L."/>
            <person name="Martin S."/>
            <person name="Wray P."/>
            <person name="Ellington A."/>
            <person name="Matthews N."/>
            <person name="Ellwood M."/>
            <person name="Woodmansey R."/>
            <person name="Clark G."/>
            <person name="Cooper J."/>
            <person name="Tromans A."/>
            <person name="Grafham D."/>
            <person name="Skuce C."/>
            <person name="Pandian R."/>
            <person name="Andrews R."/>
            <person name="Harrison E."/>
            <person name="Kimberley A."/>
            <person name="Garnett J."/>
            <person name="Fosker N."/>
            <person name="Hall R."/>
            <person name="Garner P."/>
            <person name="Kelly D."/>
            <person name="Bird C."/>
            <person name="Palmer S."/>
            <person name="Gehring I."/>
            <person name="Berger A."/>
            <person name="Dooley C.M."/>
            <person name="Ersan-Urun Z."/>
            <person name="Eser C."/>
            <person name="Geiger H."/>
            <person name="Geisler M."/>
            <person name="Karotki L."/>
            <person name="Kirn A."/>
            <person name="Konantz J."/>
            <person name="Konantz M."/>
            <person name="Oberlander M."/>
            <person name="Rudolph-Geiger S."/>
            <person name="Teucke M."/>
            <person name="Lanz C."/>
            <person name="Raddatz G."/>
            <person name="Osoegawa K."/>
            <person name="Zhu B."/>
            <person name="Rapp A."/>
            <person name="Widaa S."/>
            <person name="Langford C."/>
            <person name="Yang F."/>
            <person name="Schuster S.C."/>
            <person name="Carter N.P."/>
            <person name="Harrow J."/>
            <person name="Ning Z."/>
            <person name="Herrero J."/>
            <person name="Searle S.M."/>
            <person name="Enright A."/>
            <person name="Geisler R."/>
            <person name="Plasterk R.H."/>
            <person name="Lee C."/>
            <person name="Westerfield M."/>
            <person name="de Jong P.J."/>
            <person name="Zon L.I."/>
            <person name="Postlethwait J.H."/>
            <person name="Nusslein-Volhard C."/>
            <person name="Hubbard T.J."/>
            <person name="Roest Crollius H."/>
            <person name="Rogers J."/>
            <person name="Stemple D.L."/>
        </authorList>
    </citation>
    <scope>NUCLEOTIDE SEQUENCE [LARGE SCALE GENOMIC DNA]</scope>
    <source>
        <strain>Tuebingen</strain>
    </source>
</reference>
<reference key="2">
    <citation type="submission" date="2004-11" db="EMBL/GenBank/DDBJ databases">
        <authorList>
            <consortium name="NIH - Zebrafish Gene Collection (ZGC) project"/>
        </authorList>
    </citation>
    <scope>NUCLEOTIDE SEQUENCE [LARGE SCALE MRNA]</scope>
    <source>
        <tissue>Embryo</tissue>
    </source>
</reference>
<reference key="3">
    <citation type="journal article" date="2015" name="Hum. Mol. Genet.">
        <title>The Warsaw breakage syndrome-related protein DDX11 is required for ribosomal RNA synthesis and embryonic development.</title>
        <authorList>
            <person name="Sun X."/>
            <person name="Chen H."/>
            <person name="Deng Z."/>
            <person name="Hu B."/>
            <person name="Luo H."/>
            <person name="Zeng X."/>
            <person name="Han L."/>
            <person name="Cai G."/>
            <person name="Ma L."/>
        </authorList>
    </citation>
    <scope>FUNCTION</scope>
    <scope>DISRUPTION PHENOTYPE</scope>
</reference>
<organism>
    <name type="scientific">Danio rerio</name>
    <name type="common">Zebrafish</name>
    <name type="synonym">Brachydanio rerio</name>
    <dbReference type="NCBI Taxonomy" id="7955"/>
    <lineage>
        <taxon>Eukaryota</taxon>
        <taxon>Metazoa</taxon>
        <taxon>Chordata</taxon>
        <taxon>Craniata</taxon>
        <taxon>Vertebrata</taxon>
        <taxon>Euteleostomi</taxon>
        <taxon>Actinopterygii</taxon>
        <taxon>Neopterygii</taxon>
        <taxon>Teleostei</taxon>
        <taxon>Ostariophysi</taxon>
        <taxon>Cypriniformes</taxon>
        <taxon>Danionidae</taxon>
        <taxon>Danioninae</taxon>
        <taxon>Danio</taxon>
    </lineage>
</organism>
<protein>
    <recommendedName>
        <fullName evidence="7">ATP-dependent DNA helicase DDX11</fullName>
        <ecNumber evidence="3">5.6.2.3</ecNumber>
    </recommendedName>
    <alternativeName>
        <fullName evidence="3">DEAD/H-box protein 11</fullName>
    </alternativeName>
    <alternativeName>
        <fullName evidence="7">DNA 5'-3' helicase DDX11</fullName>
    </alternativeName>
</protein>
<name>DDX11_DANRE</name>
<feature type="chain" id="PRO_0000438279" description="ATP-dependent DNA helicase DDX11">
    <location>
        <begin position="1"/>
        <end position="890"/>
    </location>
</feature>
<feature type="domain" description="Helicase ATP-binding" evidence="4">
    <location>
        <begin position="4"/>
        <end position="424"/>
    </location>
</feature>
<feature type="region of interest" description="Disordered" evidence="5">
    <location>
        <begin position="71"/>
        <end position="95"/>
    </location>
</feature>
<feature type="region of interest" description="Disordered" evidence="5">
    <location>
        <begin position="176"/>
        <end position="199"/>
    </location>
</feature>
<feature type="short sequence motif" description="DEAH box" evidence="4">
    <location>
        <begin position="372"/>
        <end position="375"/>
    </location>
</feature>
<feature type="compositionally biased region" description="Basic and acidic residues" evidence="5">
    <location>
        <begin position="71"/>
        <end position="85"/>
    </location>
</feature>
<feature type="binding site" evidence="4">
    <location>
        <begin position="39"/>
        <end position="46"/>
    </location>
    <ligand>
        <name>ATP</name>
        <dbReference type="ChEBI" id="CHEBI:30616"/>
    </ligand>
</feature>
<feature type="binding site" evidence="1">
    <location>
        <position position="246"/>
    </location>
    <ligand>
        <name>[4Fe-4S] cluster</name>
        <dbReference type="ChEBI" id="CHEBI:49883"/>
    </ligand>
</feature>
<feature type="binding site" evidence="1">
    <location>
        <position position="264"/>
    </location>
    <ligand>
        <name>[4Fe-4S] cluster</name>
        <dbReference type="ChEBI" id="CHEBI:49883"/>
    </ligand>
</feature>
<feature type="binding site" evidence="1">
    <location>
        <position position="294"/>
    </location>
    <ligand>
        <name>[4Fe-4S] cluster</name>
        <dbReference type="ChEBI" id="CHEBI:49883"/>
    </ligand>
</feature>
<feature type="binding site" evidence="1">
    <location>
        <position position="329"/>
    </location>
    <ligand>
        <name>[4Fe-4S] cluster</name>
        <dbReference type="ChEBI" id="CHEBI:49883"/>
    </ligand>
</feature>
<feature type="sequence conflict" description="In Ref. 2; AAH85645." evidence="7" ref="2">
    <original>S</original>
    <variation>N</variation>
    <location>
        <position position="5"/>
    </location>
</feature>
<feature type="sequence conflict" description="In Ref. 2; AAH85645." evidence="7" ref="2">
    <original>A</original>
    <variation>S</variation>
    <location>
        <position position="160"/>
    </location>
</feature>
<feature type="sequence conflict" description="In Ref. 2; AAH85645." evidence="7" ref="2">
    <original>G</original>
    <variation>W</variation>
    <location>
        <position position="516"/>
    </location>
</feature>
<feature type="sequence conflict" description="In Ref. 2; AAH85645." evidence="7" ref="2">
    <original>V</original>
    <variation>I</variation>
    <location>
        <position position="565"/>
    </location>
</feature>
<accession>F1R345</accession>
<accession>Q5U399</accession>
<evidence type="ECO:0000250" key="1">
    <source>
        <dbReference type="UniProtKB" id="P18074"/>
    </source>
</evidence>
<evidence type="ECO:0000250" key="2">
    <source>
        <dbReference type="UniProtKB" id="Q6AXC6"/>
    </source>
</evidence>
<evidence type="ECO:0000250" key="3">
    <source>
        <dbReference type="UniProtKB" id="Q96FC9"/>
    </source>
</evidence>
<evidence type="ECO:0000255" key="4">
    <source>
        <dbReference type="PROSITE-ProRule" id="PRU00541"/>
    </source>
</evidence>
<evidence type="ECO:0000256" key="5">
    <source>
        <dbReference type="SAM" id="MobiDB-lite"/>
    </source>
</evidence>
<evidence type="ECO:0000269" key="6">
    <source>
    </source>
</evidence>
<evidence type="ECO:0000305" key="7"/>
<sequence>MESKSGRFPFPFQPYPIQESFMEALYTALDQRKVGIFESPTGTGKSLSLICGALTWLRDYEEQRKQEAARLLEGQKDSDVVKEKNSNSGPPEPDWVSEFVQKKAERDMVNKLKDEELKRKKREERLEMIRHNAQLRYAMKRKADEDDEAVKLLQLSREGAEPETHSPEEEGLIVAEYESDDEATPKSRLCDDDNDDDDDLEEEHVTKIYYCSRTHSQLAQFVHEVQKSPYGDAVRLVNLGSRQNLCINPEVVRLGNVQMMNERCLEMQKNKHEKRQKASDSESKRSRGLAKATCVFSRFENLMAMKDEVLVKVRDVEQLIQHGRETHTCPYYSTRMSIPAAQVVVLPYQSLLHASTRKASGIKLKDQIVIIDEAHNLMDTISAIHSAEISGGQLCRAHSQLSQYCERYRSRLKAKNLMYIKQILFVLEGLVRTLGGKVGQNPNTQSCQTGSELLTINDFLFKAQVDNINLFKVQKYFEKSMISRKLCGFAEKYEGSGINTHSSSKNKENRRTEGLGRFLQTLQSKPTDVSEQQMAVEDKPIMASPMMLAESFLFALTNANKDGRVVIQRQACVAQSSLKFLLLNAAVHFAQILQECRAVIIAGGTMQPVADFKEQLLFSAGVTEERILEFSCGHVIPPENILPIVLCAGPSGQQLEFTFQTRDSPQMMEETGRVLSNLCNIVPGGVVCFFPSYEYEKRILGHWESTGILQRLQSKKKIFQEPKKASQVEQVLSEYSKCIQRCSNIGGGQTGALLFSVVGGKMSEGINFSDDLGRCIVMVGMPYPNIKSPELQEKMAYLDKHMPHVAGKSPGKALVESLCMKAVNQSIGRAIRHRGDYACIVLCDHRYARTGTLQKLPEWIRSSTHTHATFGPAFASARRFFLEKRQKATL</sequence>
<proteinExistence type="evidence at transcript level"/>
<dbReference type="EC" id="5.6.2.3" evidence="3"/>
<dbReference type="EMBL" id="CU928088">
    <property type="status" value="NOT_ANNOTATED_CDS"/>
    <property type="molecule type" value="Genomic_DNA"/>
</dbReference>
<dbReference type="EMBL" id="BC085645">
    <property type="protein sequence ID" value="AAH85645.1"/>
    <property type="molecule type" value="mRNA"/>
</dbReference>
<dbReference type="RefSeq" id="NP_001007320.1">
    <property type="nucleotide sequence ID" value="NM_001007319.1"/>
</dbReference>
<dbReference type="SMR" id="F1R345"/>
<dbReference type="FunCoup" id="F1R345">
    <property type="interactions" value="1401"/>
</dbReference>
<dbReference type="STRING" id="7955.ENSDARP00000025514"/>
<dbReference type="PaxDb" id="7955-ENSDARP00000025514"/>
<dbReference type="Ensembl" id="ENSDART00000009217">
    <property type="protein sequence ID" value="ENSDARP00000025514"/>
    <property type="gene ID" value="ENSDARG00000011072"/>
</dbReference>
<dbReference type="GeneID" id="492353"/>
<dbReference type="KEGG" id="dre:492353"/>
<dbReference type="AGR" id="ZFIN:ZDB-GENE-041114-191"/>
<dbReference type="CTD" id="1663"/>
<dbReference type="ZFIN" id="ZDB-GENE-041114-191">
    <property type="gene designation" value="ddx11"/>
</dbReference>
<dbReference type="eggNOG" id="KOG1133">
    <property type="taxonomic scope" value="Eukaryota"/>
</dbReference>
<dbReference type="HOGENOM" id="CLU_006515_2_1_1"/>
<dbReference type="InParanoid" id="F1R345"/>
<dbReference type="OMA" id="QTHQFRD"/>
<dbReference type="OrthoDB" id="267079at2759"/>
<dbReference type="PhylomeDB" id="F1R345"/>
<dbReference type="TreeFam" id="TF300435"/>
<dbReference type="PRO" id="PR:F1R345"/>
<dbReference type="Proteomes" id="UP000000437">
    <property type="component" value="Chromosome 18"/>
</dbReference>
<dbReference type="Bgee" id="ENSDARG00000011072">
    <property type="expression patterns" value="Expressed in mature ovarian follicle and 27 other cell types or tissues"/>
</dbReference>
<dbReference type="ExpressionAtlas" id="F1R345">
    <property type="expression patterns" value="baseline and differential"/>
</dbReference>
<dbReference type="GO" id="GO:0005813">
    <property type="term" value="C:centrosome"/>
    <property type="evidence" value="ECO:0007669"/>
    <property type="project" value="UniProtKB-SubCell"/>
</dbReference>
<dbReference type="GO" id="GO:0005737">
    <property type="term" value="C:cytoplasm"/>
    <property type="evidence" value="ECO:0007669"/>
    <property type="project" value="UniProtKB-KW"/>
</dbReference>
<dbReference type="GO" id="GO:0030496">
    <property type="term" value="C:midbody"/>
    <property type="evidence" value="ECO:0007669"/>
    <property type="project" value="UniProtKB-SubCell"/>
</dbReference>
<dbReference type="GO" id="GO:0005730">
    <property type="term" value="C:nucleolus"/>
    <property type="evidence" value="ECO:0007669"/>
    <property type="project" value="UniProtKB-SubCell"/>
</dbReference>
<dbReference type="GO" id="GO:0005634">
    <property type="term" value="C:nucleus"/>
    <property type="evidence" value="ECO:0000318"/>
    <property type="project" value="GO_Central"/>
</dbReference>
<dbReference type="GO" id="GO:0000922">
    <property type="term" value="C:spindle pole"/>
    <property type="evidence" value="ECO:0007669"/>
    <property type="project" value="UniProtKB-SubCell"/>
</dbReference>
<dbReference type="GO" id="GO:0051539">
    <property type="term" value="F:4 iron, 4 sulfur cluster binding"/>
    <property type="evidence" value="ECO:0007669"/>
    <property type="project" value="UniProtKB-KW"/>
</dbReference>
<dbReference type="GO" id="GO:0005524">
    <property type="term" value="F:ATP binding"/>
    <property type="evidence" value="ECO:0007669"/>
    <property type="project" value="UniProtKB-KW"/>
</dbReference>
<dbReference type="GO" id="GO:0016887">
    <property type="term" value="F:ATP hydrolysis activity"/>
    <property type="evidence" value="ECO:0007669"/>
    <property type="project" value="RHEA"/>
</dbReference>
<dbReference type="GO" id="GO:0003677">
    <property type="term" value="F:DNA binding"/>
    <property type="evidence" value="ECO:0007669"/>
    <property type="project" value="UniProtKB-KW"/>
</dbReference>
<dbReference type="GO" id="GO:0003678">
    <property type="term" value="F:DNA helicase activity"/>
    <property type="evidence" value="ECO:0000318"/>
    <property type="project" value="GO_Central"/>
</dbReference>
<dbReference type="GO" id="GO:0046872">
    <property type="term" value="F:metal ion binding"/>
    <property type="evidence" value="ECO:0007669"/>
    <property type="project" value="UniProtKB-KW"/>
</dbReference>
<dbReference type="GO" id="GO:0003723">
    <property type="term" value="F:RNA binding"/>
    <property type="evidence" value="ECO:0007669"/>
    <property type="project" value="UniProtKB-KW"/>
</dbReference>
<dbReference type="GO" id="GO:0006281">
    <property type="term" value="P:DNA repair"/>
    <property type="evidence" value="ECO:0007669"/>
    <property type="project" value="UniProtKB-KW"/>
</dbReference>
<dbReference type="GO" id="GO:0006260">
    <property type="term" value="P:DNA replication"/>
    <property type="evidence" value="ECO:0007669"/>
    <property type="project" value="UniProtKB-KW"/>
</dbReference>
<dbReference type="GO" id="GO:0034085">
    <property type="term" value="P:establishment of sister chromatid cohesion"/>
    <property type="evidence" value="ECO:0000318"/>
    <property type="project" value="GO_Central"/>
</dbReference>
<dbReference type="GO" id="GO:1990700">
    <property type="term" value="P:nucleolar chromatin organization"/>
    <property type="evidence" value="ECO:0000315"/>
    <property type="project" value="ZFIN"/>
</dbReference>
<dbReference type="GO" id="GO:1901836">
    <property type="term" value="P:regulation of transcription of nucleolar large rRNA by RNA polymerase I"/>
    <property type="evidence" value="ECO:0000315"/>
    <property type="project" value="ZFIN"/>
</dbReference>
<dbReference type="GO" id="GO:0009303">
    <property type="term" value="P:rRNA transcription"/>
    <property type="evidence" value="ECO:0000315"/>
    <property type="project" value="ZFIN"/>
</dbReference>
<dbReference type="CDD" id="cd18788">
    <property type="entry name" value="SF2_C_XPD"/>
    <property type="match status" value="1"/>
</dbReference>
<dbReference type="FunFam" id="3.40.50.300:FF:000910">
    <property type="entry name" value="probable ATP-dependent DNA helicase DDX11"/>
    <property type="match status" value="1"/>
</dbReference>
<dbReference type="FunFam" id="3.40.50.300:FF:002969">
    <property type="entry name" value="Putative ATP-dependent DNA helicase DDX11"/>
    <property type="match status" value="1"/>
</dbReference>
<dbReference type="FunFam" id="3.40.50.300:FF:000909">
    <property type="entry name" value="Putative ATP-dependent RNA helicase DDX11"/>
    <property type="match status" value="1"/>
</dbReference>
<dbReference type="Gene3D" id="3.40.50.300">
    <property type="entry name" value="P-loop containing nucleotide triphosphate hydrolases"/>
    <property type="match status" value="3"/>
</dbReference>
<dbReference type="InterPro" id="IPR006555">
    <property type="entry name" value="ATP-dep_Helicase_C"/>
</dbReference>
<dbReference type="InterPro" id="IPR045028">
    <property type="entry name" value="DinG/Rad3-like"/>
</dbReference>
<dbReference type="InterPro" id="IPR014013">
    <property type="entry name" value="Helic_SF1/SF2_ATP-bd_DinG/Rad3"/>
</dbReference>
<dbReference type="InterPro" id="IPR006554">
    <property type="entry name" value="Helicase-like_DEXD_c2"/>
</dbReference>
<dbReference type="InterPro" id="IPR027417">
    <property type="entry name" value="P-loop_NTPase"/>
</dbReference>
<dbReference type="InterPro" id="IPR010614">
    <property type="entry name" value="RAD3-like_helicase_DEAD"/>
</dbReference>
<dbReference type="InterPro" id="IPR013020">
    <property type="entry name" value="Rad3/Chl1-like"/>
</dbReference>
<dbReference type="NCBIfam" id="TIGR00604">
    <property type="entry name" value="rad3"/>
    <property type="match status" value="1"/>
</dbReference>
<dbReference type="PANTHER" id="PTHR11472:SF41">
    <property type="entry name" value="ATP-DEPENDENT DNA HELICASE DDX11-RELATED"/>
    <property type="match status" value="1"/>
</dbReference>
<dbReference type="PANTHER" id="PTHR11472">
    <property type="entry name" value="DNA REPAIR DEAD HELICASE RAD3/XP-D SUBFAMILY MEMBER"/>
    <property type="match status" value="1"/>
</dbReference>
<dbReference type="Pfam" id="PF06733">
    <property type="entry name" value="DEAD_2"/>
    <property type="match status" value="1"/>
</dbReference>
<dbReference type="Pfam" id="PF13307">
    <property type="entry name" value="Helicase_C_2"/>
    <property type="match status" value="1"/>
</dbReference>
<dbReference type="SMART" id="SM00488">
    <property type="entry name" value="DEXDc2"/>
    <property type="match status" value="1"/>
</dbReference>
<dbReference type="SMART" id="SM00491">
    <property type="entry name" value="HELICc2"/>
    <property type="match status" value="1"/>
</dbReference>
<dbReference type="SUPFAM" id="SSF52540">
    <property type="entry name" value="P-loop containing nucleoside triphosphate hydrolases"/>
    <property type="match status" value="1"/>
</dbReference>
<dbReference type="PROSITE" id="PS51193">
    <property type="entry name" value="HELICASE_ATP_BIND_2"/>
    <property type="match status" value="1"/>
</dbReference>
<keyword id="KW-0004">4Fe-4S</keyword>
<keyword id="KW-0010">Activator</keyword>
<keyword id="KW-0067">ATP-binding</keyword>
<keyword id="KW-0963">Cytoplasm</keyword>
<keyword id="KW-0206">Cytoskeleton</keyword>
<keyword id="KW-0217">Developmental protein</keyword>
<keyword id="KW-0227">DNA damage</keyword>
<keyword id="KW-0234">DNA repair</keyword>
<keyword id="KW-0235">DNA replication</keyword>
<keyword id="KW-0238">DNA-binding</keyword>
<keyword id="KW-0347">Helicase</keyword>
<keyword id="KW-0378">Hydrolase</keyword>
<keyword id="KW-0408">Iron</keyword>
<keyword id="KW-0411">Iron-sulfur</keyword>
<keyword id="KW-0413">Isomerase</keyword>
<keyword id="KW-0479">Metal-binding</keyword>
<keyword id="KW-0547">Nucleotide-binding</keyword>
<keyword id="KW-0539">Nucleus</keyword>
<keyword id="KW-1185">Reference proteome</keyword>
<keyword id="KW-0694">RNA-binding</keyword>
<keyword id="KW-0804">Transcription</keyword>
<keyword id="KW-0805">Transcription regulation</keyword>
<comment type="function">
    <text evidence="2 3 6">DNA-dependent ATPase and ATP-dependent DNA helicase that participates in various functions in genomic stability, including DNA replication, DNA repair and heterochromatin organization as well as in ribosomal RNA synthesis. Plays a role in DNA double-strand break (DSB) repair at the DNA replication fork during DNA replication recovery from DNA damage. Plays a role in the regulation of sister chromatid cohesion and mitotic chromosome segregation. Stimulates 5'-single-stranded DNA flap endonuclease activity of FEN1 in an ATP- and helicase-independent manner. Also plays a role in heterochromatin organization (By similarity). Involved in rRNA transcription activation through binding to active hypomethylated rDNA gene loci by recruiting UBTF and the RNA polymerase Pol I transcriptional machinery (PubMed:26089203). Plays a role in embryonic development (PubMed:26089203). Associates with chromatin at DNA replication fork regions. Binds to single- and double-stranded DNAs (By similarity).</text>
</comment>
<comment type="catalytic activity">
    <reaction evidence="3">
        <text>Couples ATP hydrolysis with the unwinding of duplex DNA at the replication fork by translocating in the 5'-3' direction. This creates two antiparallel DNA single strands (ssDNA). The leading ssDNA polymer is the template for DNA polymerase III holoenzyme which synthesizes a continuous strand.</text>
        <dbReference type="EC" id="5.6.2.3"/>
    </reaction>
</comment>
<comment type="catalytic activity">
    <reaction evidence="3">
        <text>ATP + H2O = ADP + phosphate + H(+)</text>
        <dbReference type="Rhea" id="RHEA:13065"/>
        <dbReference type="ChEBI" id="CHEBI:15377"/>
        <dbReference type="ChEBI" id="CHEBI:15378"/>
        <dbReference type="ChEBI" id="CHEBI:30616"/>
        <dbReference type="ChEBI" id="CHEBI:43474"/>
        <dbReference type="ChEBI" id="CHEBI:456216"/>
        <dbReference type="EC" id="5.6.2.3"/>
    </reaction>
</comment>
<comment type="cofactor">
    <cofactor evidence="1">
        <name>[4Fe-4S] cluster</name>
        <dbReference type="ChEBI" id="CHEBI:49883"/>
    </cofactor>
    <text evidence="1">Binds 1 [4Fe-4S] cluster.</text>
</comment>
<comment type="subcellular location">
    <subcellularLocation>
        <location evidence="3">Nucleus</location>
    </subcellularLocation>
    <subcellularLocation>
        <location evidence="3">Nucleus</location>
        <location evidence="3">Nucleolus</location>
    </subcellularLocation>
    <subcellularLocation>
        <location evidence="3">Cytoplasm</location>
        <location evidence="3">Cytoskeleton</location>
        <location evidence="3">Spindle pole</location>
    </subcellularLocation>
    <subcellularLocation>
        <location evidence="3">Midbody</location>
    </subcellularLocation>
    <subcellularLocation>
        <location evidence="3">Cytoplasm</location>
        <location evidence="3">Cytoskeleton</location>
        <location evidence="3">Microtubule organizing center</location>
        <location evidence="3">Centrosome</location>
    </subcellularLocation>
</comment>
<comment type="disruption phenotype">
    <text evidence="6">Morpholino knockdown of the protein leads to abnormal craniofacial and vertebrate development with shortened and twisted torsos, smaller eyes and low mouth positions at 3 days post-fertilization (dpf).</text>
</comment>
<comment type="similarity">
    <text evidence="7">Belongs to the DEAD box helicase family. DEAH subfamily. DDX11/CHL1 sub-subfamily.</text>
</comment>
<gene>
    <name evidence="3" type="primary">ddx11</name>
    <name type="synonym">zgc:92172</name>
</gene>